<reference key="1">
    <citation type="journal article" date="2000" name="Science">
        <title>The genome sequence of Drosophila melanogaster.</title>
        <authorList>
            <person name="Adams M.D."/>
            <person name="Celniker S.E."/>
            <person name="Holt R.A."/>
            <person name="Evans C.A."/>
            <person name="Gocayne J.D."/>
            <person name="Amanatides P.G."/>
            <person name="Scherer S.E."/>
            <person name="Li P.W."/>
            <person name="Hoskins R.A."/>
            <person name="Galle R.F."/>
            <person name="George R.A."/>
            <person name="Lewis S.E."/>
            <person name="Richards S."/>
            <person name="Ashburner M."/>
            <person name="Henderson S.N."/>
            <person name="Sutton G.G."/>
            <person name="Wortman J.R."/>
            <person name="Yandell M.D."/>
            <person name="Zhang Q."/>
            <person name="Chen L.X."/>
            <person name="Brandon R.C."/>
            <person name="Rogers Y.-H.C."/>
            <person name="Blazej R.G."/>
            <person name="Champe M."/>
            <person name="Pfeiffer B.D."/>
            <person name="Wan K.H."/>
            <person name="Doyle C."/>
            <person name="Baxter E.G."/>
            <person name="Helt G."/>
            <person name="Nelson C.R."/>
            <person name="Miklos G.L.G."/>
            <person name="Abril J.F."/>
            <person name="Agbayani A."/>
            <person name="An H.-J."/>
            <person name="Andrews-Pfannkoch C."/>
            <person name="Baldwin D."/>
            <person name="Ballew R.M."/>
            <person name="Basu A."/>
            <person name="Baxendale J."/>
            <person name="Bayraktaroglu L."/>
            <person name="Beasley E.M."/>
            <person name="Beeson K.Y."/>
            <person name="Benos P.V."/>
            <person name="Berman B.P."/>
            <person name="Bhandari D."/>
            <person name="Bolshakov S."/>
            <person name="Borkova D."/>
            <person name="Botchan M.R."/>
            <person name="Bouck J."/>
            <person name="Brokstein P."/>
            <person name="Brottier P."/>
            <person name="Burtis K.C."/>
            <person name="Busam D.A."/>
            <person name="Butler H."/>
            <person name="Cadieu E."/>
            <person name="Center A."/>
            <person name="Chandra I."/>
            <person name="Cherry J.M."/>
            <person name="Cawley S."/>
            <person name="Dahlke C."/>
            <person name="Davenport L.B."/>
            <person name="Davies P."/>
            <person name="de Pablos B."/>
            <person name="Delcher A."/>
            <person name="Deng Z."/>
            <person name="Mays A.D."/>
            <person name="Dew I."/>
            <person name="Dietz S.M."/>
            <person name="Dodson K."/>
            <person name="Doup L.E."/>
            <person name="Downes M."/>
            <person name="Dugan-Rocha S."/>
            <person name="Dunkov B.C."/>
            <person name="Dunn P."/>
            <person name="Durbin K.J."/>
            <person name="Evangelista C.C."/>
            <person name="Ferraz C."/>
            <person name="Ferriera S."/>
            <person name="Fleischmann W."/>
            <person name="Fosler C."/>
            <person name="Gabrielian A.E."/>
            <person name="Garg N.S."/>
            <person name="Gelbart W.M."/>
            <person name="Glasser K."/>
            <person name="Glodek A."/>
            <person name="Gong F."/>
            <person name="Gorrell J.H."/>
            <person name="Gu Z."/>
            <person name="Guan P."/>
            <person name="Harris M."/>
            <person name="Harris N.L."/>
            <person name="Harvey D.A."/>
            <person name="Heiman T.J."/>
            <person name="Hernandez J.R."/>
            <person name="Houck J."/>
            <person name="Hostin D."/>
            <person name="Houston K.A."/>
            <person name="Howland T.J."/>
            <person name="Wei M.-H."/>
            <person name="Ibegwam C."/>
            <person name="Jalali M."/>
            <person name="Kalush F."/>
            <person name="Karpen G.H."/>
            <person name="Ke Z."/>
            <person name="Kennison J.A."/>
            <person name="Ketchum K.A."/>
            <person name="Kimmel B.E."/>
            <person name="Kodira C.D."/>
            <person name="Kraft C.L."/>
            <person name="Kravitz S."/>
            <person name="Kulp D."/>
            <person name="Lai Z."/>
            <person name="Lasko P."/>
            <person name="Lei Y."/>
            <person name="Levitsky A.A."/>
            <person name="Li J.H."/>
            <person name="Li Z."/>
            <person name="Liang Y."/>
            <person name="Lin X."/>
            <person name="Liu X."/>
            <person name="Mattei B."/>
            <person name="McIntosh T.C."/>
            <person name="McLeod M.P."/>
            <person name="McPherson D."/>
            <person name="Merkulov G."/>
            <person name="Milshina N.V."/>
            <person name="Mobarry C."/>
            <person name="Morris J."/>
            <person name="Moshrefi A."/>
            <person name="Mount S.M."/>
            <person name="Moy M."/>
            <person name="Murphy B."/>
            <person name="Murphy L."/>
            <person name="Muzny D.M."/>
            <person name="Nelson D.L."/>
            <person name="Nelson D.R."/>
            <person name="Nelson K.A."/>
            <person name="Nixon K."/>
            <person name="Nusskern D.R."/>
            <person name="Pacleb J.M."/>
            <person name="Palazzolo M."/>
            <person name="Pittman G.S."/>
            <person name="Pan S."/>
            <person name="Pollard J."/>
            <person name="Puri V."/>
            <person name="Reese M.G."/>
            <person name="Reinert K."/>
            <person name="Remington K."/>
            <person name="Saunders R.D.C."/>
            <person name="Scheeler F."/>
            <person name="Shen H."/>
            <person name="Shue B.C."/>
            <person name="Siden-Kiamos I."/>
            <person name="Simpson M."/>
            <person name="Skupski M.P."/>
            <person name="Smith T.J."/>
            <person name="Spier E."/>
            <person name="Spradling A.C."/>
            <person name="Stapleton M."/>
            <person name="Strong R."/>
            <person name="Sun E."/>
            <person name="Svirskas R."/>
            <person name="Tector C."/>
            <person name="Turner R."/>
            <person name="Venter E."/>
            <person name="Wang A.H."/>
            <person name="Wang X."/>
            <person name="Wang Z.-Y."/>
            <person name="Wassarman D.A."/>
            <person name="Weinstock G.M."/>
            <person name="Weissenbach J."/>
            <person name="Williams S.M."/>
            <person name="Woodage T."/>
            <person name="Worley K.C."/>
            <person name="Wu D."/>
            <person name="Yang S."/>
            <person name="Yao Q.A."/>
            <person name="Ye J."/>
            <person name="Yeh R.-F."/>
            <person name="Zaveri J.S."/>
            <person name="Zhan M."/>
            <person name="Zhang G."/>
            <person name="Zhao Q."/>
            <person name="Zheng L."/>
            <person name="Zheng X.H."/>
            <person name="Zhong F.N."/>
            <person name="Zhong W."/>
            <person name="Zhou X."/>
            <person name="Zhu S.C."/>
            <person name="Zhu X."/>
            <person name="Smith H.O."/>
            <person name="Gibbs R.A."/>
            <person name="Myers E.W."/>
            <person name="Rubin G.M."/>
            <person name="Venter J.C."/>
        </authorList>
    </citation>
    <scope>NUCLEOTIDE SEQUENCE [LARGE SCALE GENOMIC DNA]</scope>
    <source>
        <strain>Berkeley</strain>
    </source>
</reference>
<reference key="2">
    <citation type="journal article" date="2002" name="Genome Biol.">
        <title>Annotation of the Drosophila melanogaster euchromatic genome: a systematic review.</title>
        <authorList>
            <person name="Misra S."/>
            <person name="Crosby M.A."/>
            <person name="Mungall C.J."/>
            <person name="Matthews B.B."/>
            <person name="Campbell K.S."/>
            <person name="Hradecky P."/>
            <person name="Huang Y."/>
            <person name="Kaminker J.S."/>
            <person name="Millburn G.H."/>
            <person name="Prochnik S.E."/>
            <person name="Smith C.D."/>
            <person name="Tupy J.L."/>
            <person name="Whitfield E.J."/>
            <person name="Bayraktaroglu L."/>
            <person name="Berman B.P."/>
            <person name="Bettencourt B.R."/>
            <person name="Celniker S.E."/>
            <person name="de Grey A.D.N.J."/>
            <person name="Drysdale R.A."/>
            <person name="Harris N.L."/>
            <person name="Richter J."/>
            <person name="Russo S."/>
            <person name="Schroeder A.J."/>
            <person name="Shu S.Q."/>
            <person name="Stapleton M."/>
            <person name="Yamada C."/>
            <person name="Ashburner M."/>
            <person name="Gelbart W.M."/>
            <person name="Rubin G.M."/>
            <person name="Lewis S.E."/>
        </authorList>
    </citation>
    <scope>GENOME REANNOTATION</scope>
    <source>
        <strain>Berkeley</strain>
    </source>
</reference>
<reference key="3">
    <citation type="journal article" date="2002" name="Genome Biol.">
        <title>A Drosophila full-length cDNA resource.</title>
        <authorList>
            <person name="Stapleton M."/>
            <person name="Carlson J.W."/>
            <person name="Brokstein P."/>
            <person name="Yu C."/>
            <person name="Champe M."/>
            <person name="George R.A."/>
            <person name="Guarin H."/>
            <person name="Kronmiller B."/>
            <person name="Pacleb J.M."/>
            <person name="Park S."/>
            <person name="Wan K.H."/>
            <person name="Rubin G.M."/>
            <person name="Celniker S.E."/>
        </authorList>
    </citation>
    <scope>NUCLEOTIDE SEQUENCE [LARGE SCALE MRNA]</scope>
    <source>
        <strain>Berkeley</strain>
        <tissue>Embryo</tissue>
        <tissue>Head</tissue>
    </source>
</reference>
<reference key="4">
    <citation type="submission" date="2008-09" db="EMBL/GenBank/DDBJ databases">
        <authorList>
            <person name="Carlson J."/>
            <person name="Booth B."/>
            <person name="Frise E."/>
            <person name="Park S."/>
            <person name="Wan K."/>
            <person name="Yu C."/>
            <person name="Celniker S.E."/>
        </authorList>
    </citation>
    <scope>NUCLEOTIDE SEQUENCE [LARGE SCALE MRNA]</scope>
    <source>
        <strain>Berkeley</strain>
    </source>
</reference>
<protein>
    <recommendedName>
        <fullName evidence="1">ATPase ASNA1 homolog</fullName>
        <ecNumber evidence="1">3.6.-.-</ecNumber>
    </recommendedName>
    <alternativeName>
        <fullName evidence="1">Arsenical pump-driving ATPase homolog</fullName>
    </alternativeName>
    <alternativeName>
        <fullName evidence="1">Arsenite-stimulated ATPase</fullName>
    </alternativeName>
</protein>
<proteinExistence type="evidence at transcript level"/>
<organism>
    <name type="scientific">Drosophila melanogaster</name>
    <name type="common">Fruit fly</name>
    <dbReference type="NCBI Taxonomy" id="7227"/>
    <lineage>
        <taxon>Eukaryota</taxon>
        <taxon>Metazoa</taxon>
        <taxon>Ecdysozoa</taxon>
        <taxon>Arthropoda</taxon>
        <taxon>Hexapoda</taxon>
        <taxon>Insecta</taxon>
        <taxon>Pterygota</taxon>
        <taxon>Neoptera</taxon>
        <taxon>Endopterygota</taxon>
        <taxon>Diptera</taxon>
        <taxon>Brachycera</taxon>
        <taxon>Muscomorpha</taxon>
        <taxon>Ephydroidea</taxon>
        <taxon>Drosophilidae</taxon>
        <taxon>Drosophila</taxon>
        <taxon>Sophophora</taxon>
    </lineage>
</organism>
<name>ASNA_DROME</name>
<comment type="function">
    <text evidence="1">ATPase required for the post-translational delivery of tail-anchored (TA) proteins to the endoplasmic reticulum. Recognizes and selectively binds the transmembrane domain of TA proteins in the cytosol. This complex then targets to the endoplasmic reticulum by membrane-bound receptors, where the tail-anchored protein is released for insertion. This process is regulated by ATP binding and hydrolysis. ATP binding drives the homodimer towards the closed dimer state, facilitating recognition of newly synthesized TA membrane proteins. ATP hydrolysis is required for insertion. Subsequently, the homodimer reverts towards the open dimer state, lowering its affinity for the membrane-bound receptor, and returning it to the cytosol to initiate a new round of targeting.</text>
</comment>
<comment type="subunit">
    <text evidence="1">Homodimer.</text>
</comment>
<comment type="subcellular location">
    <subcellularLocation>
        <location evidence="1">Cytoplasm</location>
    </subcellularLocation>
    <subcellularLocation>
        <location evidence="1">Endoplasmic reticulum</location>
    </subcellularLocation>
</comment>
<comment type="similarity">
    <text evidence="1">Belongs to the arsA ATPase family.</text>
</comment>
<feature type="chain" id="PRO_0000388151" description="ATPase ASNA1 homolog">
    <location>
        <begin position="1"/>
        <end position="336"/>
    </location>
</feature>
<feature type="active site" evidence="1">
    <location>
        <position position="58"/>
    </location>
</feature>
<feature type="binding site" evidence="1">
    <location>
        <begin position="29"/>
        <end position="36"/>
    </location>
    <ligand>
        <name>ATP</name>
        <dbReference type="ChEBI" id="CHEBI:30616"/>
    </ligand>
</feature>
<feature type="binding site" evidence="1">
    <location>
        <position position="236"/>
    </location>
    <ligand>
        <name>ATP</name>
        <dbReference type="ChEBI" id="CHEBI:30616"/>
    </ligand>
</feature>
<feature type="binding site" evidence="1">
    <location>
        <position position="263"/>
    </location>
    <ligand>
        <name>ATP</name>
        <dbReference type="ChEBI" id="CHEBI:30616"/>
    </ligand>
</feature>
<feature type="binding site" evidence="1">
    <location>
        <position position="275"/>
    </location>
    <ligand>
        <name>Zn(2+)</name>
        <dbReference type="ChEBI" id="CHEBI:29105"/>
        <note>ligand shared between dimeric partners</note>
    </ligand>
</feature>
<feature type="binding site" evidence="1">
    <location>
        <position position="278"/>
    </location>
    <ligand>
        <name>Zn(2+)</name>
        <dbReference type="ChEBI" id="CHEBI:29105"/>
        <note>ligand shared between dimeric partners</note>
    </ligand>
</feature>
<feature type="sequence conflict" description="In Ref. 3; AAL48596." evidence="2" ref="3">
    <original>R</original>
    <variation>S</variation>
    <location>
        <position position="318"/>
    </location>
</feature>
<dbReference type="EC" id="3.6.-.-" evidence="1"/>
<dbReference type="EMBL" id="AE013599">
    <property type="protein sequence ID" value="AAF59231.1"/>
    <property type="molecule type" value="Genomic_DNA"/>
</dbReference>
<dbReference type="EMBL" id="AY070974">
    <property type="protein sequence ID" value="AAL48596.1"/>
    <property type="molecule type" value="mRNA"/>
</dbReference>
<dbReference type="EMBL" id="AY113636">
    <property type="protein sequence ID" value="AAM29641.1"/>
    <property type="molecule type" value="mRNA"/>
</dbReference>
<dbReference type="EMBL" id="BT044579">
    <property type="protein sequence ID" value="ACI16541.1"/>
    <property type="molecule type" value="mRNA"/>
</dbReference>
<dbReference type="RefSeq" id="NP_610296.2">
    <property type="nucleotide sequence ID" value="NM_136452.3"/>
</dbReference>
<dbReference type="SMR" id="Q7JWD3"/>
<dbReference type="BioGRID" id="61566">
    <property type="interactions" value="6"/>
</dbReference>
<dbReference type="FunCoup" id="Q7JWD3">
    <property type="interactions" value="2091"/>
</dbReference>
<dbReference type="IntAct" id="Q7JWD3">
    <property type="interactions" value="17"/>
</dbReference>
<dbReference type="STRING" id="7227.FBpp0088029"/>
<dbReference type="PaxDb" id="7227-FBpp0088029"/>
<dbReference type="DNASU" id="35690"/>
<dbReference type="EnsemblMetazoa" id="FBtr0088955">
    <property type="protein sequence ID" value="FBpp0088029"/>
    <property type="gene ID" value="FBgn0033191"/>
</dbReference>
<dbReference type="GeneID" id="35690"/>
<dbReference type="KEGG" id="dme:Dmel_CG1598"/>
<dbReference type="UCSC" id="CG1598-RA">
    <property type="organism name" value="d. melanogaster"/>
</dbReference>
<dbReference type="AGR" id="FB:FBgn0033191"/>
<dbReference type="FlyBase" id="FBgn0033191">
    <property type="gene designation" value="CG1598"/>
</dbReference>
<dbReference type="VEuPathDB" id="VectorBase:FBgn0033191"/>
<dbReference type="eggNOG" id="KOG2825">
    <property type="taxonomic scope" value="Eukaryota"/>
</dbReference>
<dbReference type="GeneTree" id="ENSGT00390000003817"/>
<dbReference type="HOGENOM" id="CLU_040761_0_0_1"/>
<dbReference type="InParanoid" id="Q7JWD3"/>
<dbReference type="OMA" id="MDAPYEF"/>
<dbReference type="OrthoDB" id="1770at2759"/>
<dbReference type="PhylomeDB" id="Q7JWD3"/>
<dbReference type="BioGRID-ORCS" id="35690">
    <property type="hits" value="0 hits in 3 CRISPR screens"/>
</dbReference>
<dbReference type="GenomeRNAi" id="35690"/>
<dbReference type="PRO" id="PR:Q7JWD3"/>
<dbReference type="Proteomes" id="UP000000803">
    <property type="component" value="Chromosome 2R"/>
</dbReference>
<dbReference type="Bgee" id="FBgn0033191">
    <property type="expression patterns" value="Expressed in spermatocyte in testis and 191 other cell types or tissues"/>
</dbReference>
<dbReference type="ExpressionAtlas" id="Q7JWD3">
    <property type="expression patterns" value="baseline and differential"/>
</dbReference>
<dbReference type="GO" id="GO:0043529">
    <property type="term" value="C:GET complex"/>
    <property type="evidence" value="ECO:0000318"/>
    <property type="project" value="GO_Central"/>
</dbReference>
<dbReference type="GO" id="GO:0005524">
    <property type="term" value="F:ATP binding"/>
    <property type="evidence" value="ECO:0007669"/>
    <property type="project" value="UniProtKB-UniRule"/>
</dbReference>
<dbReference type="GO" id="GO:0016887">
    <property type="term" value="F:ATP hydrolysis activity"/>
    <property type="evidence" value="ECO:0000318"/>
    <property type="project" value="GO_Central"/>
</dbReference>
<dbReference type="GO" id="GO:0046872">
    <property type="term" value="F:metal ion binding"/>
    <property type="evidence" value="ECO:0007669"/>
    <property type="project" value="UniProtKB-KW"/>
</dbReference>
<dbReference type="GO" id="GO:0071816">
    <property type="term" value="P:tail-anchored membrane protein insertion into ER membrane"/>
    <property type="evidence" value="ECO:0000318"/>
    <property type="project" value="GO_Central"/>
</dbReference>
<dbReference type="CDD" id="cd02035">
    <property type="entry name" value="ArsA"/>
    <property type="match status" value="1"/>
</dbReference>
<dbReference type="FunFam" id="3.40.50.300:FF:000235">
    <property type="entry name" value="ATPase ASNA1"/>
    <property type="match status" value="1"/>
</dbReference>
<dbReference type="Gene3D" id="3.40.50.300">
    <property type="entry name" value="P-loop containing nucleotide triphosphate hydrolases"/>
    <property type="match status" value="1"/>
</dbReference>
<dbReference type="HAMAP" id="MF_03112">
    <property type="entry name" value="Asna1_Get3"/>
    <property type="match status" value="1"/>
</dbReference>
<dbReference type="InterPro" id="IPR025723">
    <property type="entry name" value="Anion-transp_ATPase-like_dom"/>
</dbReference>
<dbReference type="InterPro" id="IPR016300">
    <property type="entry name" value="ATPase_ArsA/GET3"/>
</dbReference>
<dbReference type="InterPro" id="IPR027542">
    <property type="entry name" value="ATPase_ArsA/GET3_euk"/>
</dbReference>
<dbReference type="InterPro" id="IPR027417">
    <property type="entry name" value="P-loop_NTPase"/>
</dbReference>
<dbReference type="NCBIfam" id="TIGR00345">
    <property type="entry name" value="GET3_arsA_TRC40"/>
    <property type="match status" value="1"/>
</dbReference>
<dbReference type="PANTHER" id="PTHR10803">
    <property type="entry name" value="ARSENICAL PUMP-DRIVING ATPASE ARSENITE-TRANSLOCATING ATPASE"/>
    <property type="match status" value="1"/>
</dbReference>
<dbReference type="PANTHER" id="PTHR10803:SF3">
    <property type="entry name" value="ATPASE GET3"/>
    <property type="match status" value="1"/>
</dbReference>
<dbReference type="Pfam" id="PF02374">
    <property type="entry name" value="ArsA_ATPase"/>
    <property type="match status" value="1"/>
</dbReference>
<dbReference type="SUPFAM" id="SSF52540">
    <property type="entry name" value="P-loop containing nucleoside triphosphate hydrolases"/>
    <property type="match status" value="1"/>
</dbReference>
<gene>
    <name type="ORF">CG1598</name>
</gene>
<keyword id="KW-0067">ATP-binding</keyword>
<keyword id="KW-0963">Cytoplasm</keyword>
<keyword id="KW-0256">Endoplasmic reticulum</keyword>
<keyword id="KW-0378">Hydrolase</keyword>
<keyword id="KW-0479">Metal-binding</keyword>
<keyword id="KW-0547">Nucleotide-binding</keyword>
<keyword id="KW-1185">Reference proteome</keyword>
<keyword id="KW-0813">Transport</keyword>
<keyword id="KW-0862">Zinc</keyword>
<sequence length="336" mass="37581">MADNLEPLEPSLQNLVEQDSLKWIFVGGKGGVGKTTCSSSLAVQLSKVRESVLIISTDPAHNISDAFDQKFTKVPTKVNGFDNLFAMEIDPNAGLNELPEEYFDGENEALRVSKGVMQEMINALPGIDEAMSYAEVMKLVKGMNFSVVVFDTAPTGHTLRLIAFPQVVEKGLGKLLRLKMKVAPLLSQFVSMLGMADVNADTLSQKLDDMLRVITQVNEQFKNPDQTTFVCVCIAEFFSLYETERLVQELTKCGIDVHNIIVNQLLFLQNSHDSCSMCASRFKIQEKYLDQIADLYEDFHVTKLPLLEKEVRGPESIRSFSENLMKPYNPKGEPKE</sequence>
<evidence type="ECO:0000255" key="1">
    <source>
        <dbReference type="HAMAP-Rule" id="MF_03112"/>
    </source>
</evidence>
<evidence type="ECO:0000305" key="2"/>
<accession>Q7JWD3</accession>
<accession>Q8SZC0</accession>